<name>KEFG_SALPC</name>
<proteinExistence type="inferred from homology"/>
<gene>
    <name evidence="1" type="primary">kefG</name>
    <name type="ordered locus">SPC_3527</name>
</gene>
<sequence>MSQPAKVLLLYAHPESQDSVANRVLLKPAIQHNNVTVHDLYARYPDFFIDTPYEQALLREHDVIVFQHPLYTYSCPALLKEWLDRVLSRGFASGPGGNQLVGKYWRSVITTGEPESAYRYDALNRYPMSDVLRPFELTAAMCRMHWMPPIIVYWARRHSPQTLASHAKAYGEWLANPVSAGGY</sequence>
<comment type="function">
    <text evidence="1">Regulatory subunit of a potassium efflux system that confers protection against electrophiles. Required for full activity of KefB.</text>
</comment>
<comment type="catalytic activity">
    <reaction evidence="1">
        <text>a quinone + NADH + H(+) = a quinol + NAD(+)</text>
        <dbReference type="Rhea" id="RHEA:46160"/>
        <dbReference type="ChEBI" id="CHEBI:15378"/>
        <dbReference type="ChEBI" id="CHEBI:24646"/>
        <dbReference type="ChEBI" id="CHEBI:57540"/>
        <dbReference type="ChEBI" id="CHEBI:57945"/>
        <dbReference type="ChEBI" id="CHEBI:132124"/>
        <dbReference type="EC" id="1.6.5.2"/>
    </reaction>
</comment>
<comment type="catalytic activity">
    <reaction evidence="1">
        <text>a quinone + NADPH + H(+) = a quinol + NADP(+)</text>
        <dbReference type="Rhea" id="RHEA:46164"/>
        <dbReference type="ChEBI" id="CHEBI:15378"/>
        <dbReference type="ChEBI" id="CHEBI:24646"/>
        <dbReference type="ChEBI" id="CHEBI:57783"/>
        <dbReference type="ChEBI" id="CHEBI:58349"/>
        <dbReference type="ChEBI" id="CHEBI:132124"/>
        <dbReference type="EC" id="1.6.5.2"/>
    </reaction>
</comment>
<comment type="subunit">
    <text evidence="1">Interacts with KefB.</text>
</comment>
<comment type="subcellular location">
    <subcellularLocation>
        <location evidence="1">Cell inner membrane</location>
        <topology evidence="1">Peripheral membrane protein</topology>
        <orientation evidence="1">Cytoplasmic side</orientation>
    </subcellularLocation>
</comment>
<comment type="similarity">
    <text evidence="1">Belongs to the NAD(P)H dehydrogenase (quinone) family. KefG subfamily.</text>
</comment>
<accession>C0Q0D4</accession>
<protein>
    <recommendedName>
        <fullName evidence="1">Glutathione-regulated potassium-efflux system ancillary protein KefG</fullName>
    </recommendedName>
    <alternativeName>
        <fullName evidence="1">Putative quinone oxidoreductase KefG</fullName>
        <ecNumber evidence="1">1.6.5.2</ecNumber>
    </alternativeName>
</protein>
<organism>
    <name type="scientific">Salmonella paratyphi C (strain RKS4594)</name>
    <dbReference type="NCBI Taxonomy" id="476213"/>
    <lineage>
        <taxon>Bacteria</taxon>
        <taxon>Pseudomonadati</taxon>
        <taxon>Pseudomonadota</taxon>
        <taxon>Gammaproteobacteria</taxon>
        <taxon>Enterobacterales</taxon>
        <taxon>Enterobacteriaceae</taxon>
        <taxon>Salmonella</taxon>
    </lineage>
</organism>
<reference key="1">
    <citation type="journal article" date="2009" name="PLoS ONE">
        <title>Salmonella paratyphi C: genetic divergence from Salmonella choleraesuis and pathogenic convergence with Salmonella typhi.</title>
        <authorList>
            <person name="Liu W.-Q."/>
            <person name="Feng Y."/>
            <person name="Wang Y."/>
            <person name="Zou Q.-H."/>
            <person name="Chen F."/>
            <person name="Guo J.-T."/>
            <person name="Peng Y.-H."/>
            <person name="Jin Y."/>
            <person name="Li Y.-G."/>
            <person name="Hu S.-N."/>
            <person name="Johnston R.N."/>
            <person name="Liu G.-R."/>
            <person name="Liu S.-L."/>
        </authorList>
    </citation>
    <scope>NUCLEOTIDE SEQUENCE [LARGE SCALE GENOMIC DNA]</scope>
    <source>
        <strain>RKS4594</strain>
    </source>
</reference>
<feature type="chain" id="PRO_1000184626" description="Glutathione-regulated potassium-efflux system ancillary protein KefG">
    <location>
        <begin position="1"/>
        <end position="183"/>
    </location>
</feature>
<dbReference type="EC" id="1.6.5.2" evidence="1"/>
<dbReference type="EMBL" id="CP000857">
    <property type="protein sequence ID" value="ACN47611.1"/>
    <property type="molecule type" value="Genomic_DNA"/>
</dbReference>
<dbReference type="RefSeq" id="WP_000081818.1">
    <property type="nucleotide sequence ID" value="NC_012125.1"/>
</dbReference>
<dbReference type="SMR" id="C0Q0D4"/>
<dbReference type="KEGG" id="sei:SPC_3527"/>
<dbReference type="HOGENOM" id="CLU_058643_0_1_6"/>
<dbReference type="Proteomes" id="UP000001599">
    <property type="component" value="Chromosome"/>
</dbReference>
<dbReference type="GO" id="GO:0005886">
    <property type="term" value="C:plasma membrane"/>
    <property type="evidence" value="ECO:0007669"/>
    <property type="project" value="UniProtKB-SubCell"/>
</dbReference>
<dbReference type="GO" id="GO:0009055">
    <property type="term" value="F:electron transfer activity"/>
    <property type="evidence" value="ECO:0007669"/>
    <property type="project" value="TreeGrafter"/>
</dbReference>
<dbReference type="GO" id="GO:0010181">
    <property type="term" value="F:FMN binding"/>
    <property type="evidence" value="ECO:0007669"/>
    <property type="project" value="TreeGrafter"/>
</dbReference>
<dbReference type="GO" id="GO:0050136">
    <property type="term" value="F:NADH:ubiquinone reductase (non-electrogenic) activity"/>
    <property type="evidence" value="ECO:0007669"/>
    <property type="project" value="RHEA"/>
</dbReference>
<dbReference type="GO" id="GO:0008753">
    <property type="term" value="F:NADPH dehydrogenase (quinone) activity"/>
    <property type="evidence" value="ECO:0007669"/>
    <property type="project" value="RHEA"/>
</dbReference>
<dbReference type="GO" id="GO:1901381">
    <property type="term" value="P:positive regulation of potassium ion transmembrane transport"/>
    <property type="evidence" value="ECO:0007669"/>
    <property type="project" value="UniProtKB-UniRule"/>
</dbReference>
<dbReference type="GO" id="GO:0006813">
    <property type="term" value="P:potassium ion transport"/>
    <property type="evidence" value="ECO:0007669"/>
    <property type="project" value="InterPro"/>
</dbReference>
<dbReference type="FunFam" id="3.40.50.360:FF:000013">
    <property type="entry name" value="Glutathione-regulated potassium-efflux system ancillary protein KefG"/>
    <property type="match status" value="1"/>
</dbReference>
<dbReference type="Gene3D" id="3.40.50.360">
    <property type="match status" value="1"/>
</dbReference>
<dbReference type="HAMAP" id="MF_01415">
    <property type="entry name" value="K_H_efflux_KefG"/>
    <property type="match status" value="1"/>
</dbReference>
<dbReference type="InterPro" id="IPR003680">
    <property type="entry name" value="Flavodoxin_fold"/>
</dbReference>
<dbReference type="InterPro" id="IPR029039">
    <property type="entry name" value="Flavoprotein-like_sf"/>
</dbReference>
<dbReference type="InterPro" id="IPR023947">
    <property type="entry name" value="K_H_efflux_KefG"/>
</dbReference>
<dbReference type="InterPro" id="IPR046980">
    <property type="entry name" value="KefG/KefF"/>
</dbReference>
<dbReference type="NCBIfam" id="NF003430">
    <property type="entry name" value="PRK04930.1"/>
    <property type="match status" value="1"/>
</dbReference>
<dbReference type="PANTHER" id="PTHR47307">
    <property type="entry name" value="GLUTATHIONE-REGULATED POTASSIUM-EFFLUX SYSTEM ANCILLARY PROTEIN KEFG"/>
    <property type="match status" value="1"/>
</dbReference>
<dbReference type="PANTHER" id="PTHR47307:SF1">
    <property type="entry name" value="GLUTATHIONE-REGULATED POTASSIUM-EFFLUX SYSTEM ANCILLARY PROTEIN KEFG"/>
    <property type="match status" value="1"/>
</dbReference>
<dbReference type="Pfam" id="PF02525">
    <property type="entry name" value="Flavodoxin_2"/>
    <property type="match status" value="1"/>
</dbReference>
<dbReference type="SUPFAM" id="SSF52218">
    <property type="entry name" value="Flavoproteins"/>
    <property type="match status" value="1"/>
</dbReference>
<evidence type="ECO:0000255" key="1">
    <source>
        <dbReference type="HAMAP-Rule" id="MF_01415"/>
    </source>
</evidence>
<keyword id="KW-0997">Cell inner membrane</keyword>
<keyword id="KW-1003">Cell membrane</keyword>
<keyword id="KW-0472">Membrane</keyword>
<keyword id="KW-0520">NAD</keyword>
<keyword id="KW-0560">Oxidoreductase</keyword>